<proteinExistence type="evidence at protein level"/>
<evidence type="ECO:0000250" key="1"/>
<evidence type="ECO:0000305" key="2"/>
<evidence type="ECO:0007829" key="3">
    <source>
        <dbReference type="PDB" id="7DB8"/>
    </source>
</evidence>
<evidence type="ECO:0007829" key="4">
    <source>
        <dbReference type="PDB" id="7K98"/>
    </source>
</evidence>
<evidence type="ECO:0007829" key="5">
    <source>
        <dbReference type="PDB" id="7KA0"/>
    </source>
</evidence>
<gene>
    <name type="primary">pheS</name>
    <name type="ordered locus">Rv1649</name>
    <name type="ORF">MTCY06H11.14</name>
</gene>
<accession>P9WFU3</accession>
<accession>L0TA22</accession>
<accession>P94984</accession>
<name>SYFA_MYCTU</name>
<sequence>MLSPEALTTAVDAAQQAIALADTLDVLARVKTEHLGDRSPLALARQALAVLPKEQRAEAGKRVNAARNAAQRSYDERLATLRAERDAAVLVAEGIDVTLPSTRVPAGARHPIIMLAEHVADTFIAMGWELAEGPEVETEQFNFDALNFPADHPARGEQDTFYIAPEDSRQLLRTHTSPVQIRTLLARELPVYIISIGRTFRTDELDATHTPIFHQVEGLAVDRGLSMAHLRGTLDAFARAEFGPSARTRIRPHFFPFTEPSAEVDVWFANKIGGAAWVEWGGCGMVHPNVLRATGIDPDLYSGFAFGMGLERTLQFRNGIPDMRDMVEGDVRFSLPFGVGA</sequence>
<keyword id="KW-0002">3D-structure</keyword>
<keyword id="KW-0030">Aminoacyl-tRNA synthetase</keyword>
<keyword id="KW-0067">ATP-binding</keyword>
<keyword id="KW-0963">Cytoplasm</keyword>
<keyword id="KW-0436">Ligase</keyword>
<keyword id="KW-0460">Magnesium</keyword>
<keyword id="KW-0479">Metal-binding</keyword>
<keyword id="KW-0547">Nucleotide-binding</keyword>
<keyword id="KW-0648">Protein biosynthesis</keyword>
<keyword id="KW-1185">Reference proteome</keyword>
<organism>
    <name type="scientific">Mycobacterium tuberculosis (strain ATCC 25618 / H37Rv)</name>
    <dbReference type="NCBI Taxonomy" id="83332"/>
    <lineage>
        <taxon>Bacteria</taxon>
        <taxon>Bacillati</taxon>
        <taxon>Actinomycetota</taxon>
        <taxon>Actinomycetes</taxon>
        <taxon>Mycobacteriales</taxon>
        <taxon>Mycobacteriaceae</taxon>
        <taxon>Mycobacterium</taxon>
        <taxon>Mycobacterium tuberculosis complex</taxon>
    </lineage>
</organism>
<protein>
    <recommendedName>
        <fullName>Phenylalanine--tRNA ligase alpha subunit</fullName>
        <ecNumber>6.1.1.20</ecNumber>
    </recommendedName>
    <alternativeName>
        <fullName>Phenylalanyl-tRNA synthetase alpha subunit</fullName>
        <shortName>PheRS</shortName>
    </alternativeName>
</protein>
<comment type="catalytic activity">
    <reaction>
        <text>tRNA(Phe) + L-phenylalanine + ATP = L-phenylalanyl-tRNA(Phe) + AMP + diphosphate + H(+)</text>
        <dbReference type="Rhea" id="RHEA:19413"/>
        <dbReference type="Rhea" id="RHEA-COMP:9668"/>
        <dbReference type="Rhea" id="RHEA-COMP:9699"/>
        <dbReference type="ChEBI" id="CHEBI:15378"/>
        <dbReference type="ChEBI" id="CHEBI:30616"/>
        <dbReference type="ChEBI" id="CHEBI:33019"/>
        <dbReference type="ChEBI" id="CHEBI:58095"/>
        <dbReference type="ChEBI" id="CHEBI:78442"/>
        <dbReference type="ChEBI" id="CHEBI:78531"/>
        <dbReference type="ChEBI" id="CHEBI:456215"/>
        <dbReference type="EC" id="6.1.1.20"/>
    </reaction>
</comment>
<comment type="cofactor">
    <cofactor evidence="1">
        <name>Mg(2+)</name>
        <dbReference type="ChEBI" id="CHEBI:18420"/>
    </cofactor>
    <text evidence="1">Binds 2 magnesium ions per tetramer.</text>
</comment>
<comment type="subunit">
    <text evidence="1">Tetramer of two alpha and two beta subunits.</text>
</comment>
<comment type="subcellular location">
    <subcellularLocation>
        <location evidence="1">Cytoplasm</location>
    </subcellularLocation>
</comment>
<comment type="similarity">
    <text evidence="2">Belongs to the class-II aminoacyl-tRNA synthetase family. Phe-tRNA synthetase alpha subunit type 1 subfamily.</text>
</comment>
<feature type="chain" id="PRO_0000126733" description="Phenylalanine--tRNA ligase alpha subunit">
    <location>
        <begin position="1"/>
        <end position="341"/>
    </location>
</feature>
<feature type="binding site" evidence="1">
    <location>
        <position position="259"/>
    </location>
    <ligand>
        <name>Mg(2+)</name>
        <dbReference type="ChEBI" id="CHEBI:18420"/>
        <note>shared with beta subunit</note>
    </ligand>
</feature>
<feature type="helix" evidence="4">
    <location>
        <begin position="4"/>
        <end position="20"/>
    </location>
</feature>
<feature type="helix" evidence="4">
    <location>
        <begin position="24"/>
        <end position="35"/>
    </location>
</feature>
<feature type="helix" evidence="4">
    <location>
        <begin position="40"/>
        <end position="46"/>
    </location>
</feature>
<feature type="helix" evidence="4">
    <location>
        <begin position="47"/>
        <end position="49"/>
    </location>
</feature>
<feature type="turn" evidence="4">
    <location>
        <begin position="53"/>
        <end position="55"/>
    </location>
</feature>
<feature type="helix" evidence="4">
    <location>
        <begin position="56"/>
        <end position="91"/>
    </location>
</feature>
<feature type="helix" evidence="4">
    <location>
        <begin position="111"/>
        <end position="124"/>
    </location>
</feature>
<feature type="turn" evidence="4">
    <location>
        <begin position="125"/>
        <end position="127"/>
    </location>
</feature>
<feature type="strand" evidence="3">
    <location>
        <begin position="129"/>
        <end position="131"/>
    </location>
</feature>
<feature type="strand" evidence="4">
    <location>
        <begin position="135"/>
        <end position="138"/>
    </location>
</feature>
<feature type="helix" evidence="4">
    <location>
        <begin position="139"/>
        <end position="142"/>
    </location>
</feature>
<feature type="turn" evidence="4">
    <location>
        <begin position="143"/>
        <end position="147"/>
    </location>
</feature>
<feature type="strand" evidence="5">
    <location>
        <begin position="150"/>
        <end position="152"/>
    </location>
</feature>
<feature type="helix" evidence="4">
    <location>
        <begin position="153"/>
        <end position="155"/>
    </location>
</feature>
<feature type="turn" evidence="4">
    <location>
        <begin position="157"/>
        <end position="159"/>
    </location>
</feature>
<feature type="turn" evidence="4">
    <location>
        <begin position="164"/>
        <end position="167"/>
    </location>
</feature>
<feature type="strand" evidence="4">
    <location>
        <begin position="170"/>
        <end position="172"/>
    </location>
</feature>
<feature type="strand" evidence="4">
    <location>
        <begin position="174"/>
        <end position="176"/>
    </location>
</feature>
<feature type="helix" evidence="4">
    <location>
        <begin position="178"/>
        <end position="186"/>
    </location>
</feature>
<feature type="strand" evidence="4">
    <location>
        <begin position="189"/>
        <end position="200"/>
    </location>
</feature>
<feature type="strand" evidence="5">
    <location>
        <begin position="206"/>
        <end position="208"/>
    </location>
</feature>
<feature type="strand" evidence="4">
    <location>
        <begin position="211"/>
        <end position="222"/>
    </location>
</feature>
<feature type="helix" evidence="4">
    <location>
        <begin position="227"/>
        <end position="242"/>
    </location>
</feature>
<feature type="strand" evidence="4">
    <location>
        <begin position="248"/>
        <end position="252"/>
    </location>
</feature>
<feature type="strand" evidence="4">
    <location>
        <begin position="258"/>
        <end position="268"/>
    </location>
</feature>
<feature type="strand" evidence="3">
    <location>
        <begin position="272"/>
        <end position="274"/>
    </location>
</feature>
<feature type="strand" evidence="4">
    <location>
        <begin position="276"/>
        <end position="286"/>
    </location>
</feature>
<feature type="helix" evidence="4">
    <location>
        <begin position="288"/>
        <end position="292"/>
    </location>
</feature>
<feature type="turn" evidence="4">
    <location>
        <begin position="293"/>
        <end position="295"/>
    </location>
</feature>
<feature type="turn" evidence="4">
    <location>
        <begin position="298"/>
        <end position="300"/>
    </location>
</feature>
<feature type="strand" evidence="4">
    <location>
        <begin position="302"/>
        <end position="309"/>
    </location>
</feature>
<feature type="helix" evidence="4">
    <location>
        <begin position="310"/>
        <end position="318"/>
    </location>
</feature>
<feature type="helix" evidence="4">
    <location>
        <begin position="324"/>
        <end position="328"/>
    </location>
</feature>
<feature type="helix" evidence="4">
    <location>
        <begin position="331"/>
        <end position="334"/>
    </location>
</feature>
<feature type="helix" evidence="4">
    <location>
        <begin position="335"/>
        <end position="337"/>
    </location>
</feature>
<dbReference type="EC" id="6.1.1.20"/>
<dbReference type="EMBL" id="AL123456">
    <property type="protein sequence ID" value="CCP44414.1"/>
    <property type="molecule type" value="Genomic_DNA"/>
</dbReference>
<dbReference type="PIR" id="D70620">
    <property type="entry name" value="D70620"/>
</dbReference>
<dbReference type="RefSeq" id="NP_216165.3">
    <property type="nucleotide sequence ID" value="NC_000962.3"/>
</dbReference>
<dbReference type="RefSeq" id="WP_003906646.1">
    <property type="nucleotide sequence ID" value="NC_000962.3"/>
</dbReference>
<dbReference type="PDB" id="7DAW">
    <property type="method" value="X-ray"/>
    <property type="resolution" value="2.83 A"/>
    <property type="chains" value="A=1-341"/>
</dbReference>
<dbReference type="PDB" id="7DB7">
    <property type="method" value="X-ray"/>
    <property type="resolution" value="2.71 A"/>
    <property type="chains" value="A=1-341"/>
</dbReference>
<dbReference type="PDB" id="7DB8">
    <property type="method" value="X-ray"/>
    <property type="resolution" value="2.30 A"/>
    <property type="chains" value="A=1-341"/>
</dbReference>
<dbReference type="PDB" id="7K98">
    <property type="method" value="X-ray"/>
    <property type="resolution" value="2.19 A"/>
    <property type="chains" value="A/D=1-341"/>
</dbReference>
<dbReference type="PDB" id="7K9M">
    <property type="method" value="X-ray"/>
    <property type="resolution" value="2.50 A"/>
    <property type="chains" value="A=1-341"/>
</dbReference>
<dbReference type="PDB" id="7KA0">
    <property type="method" value="X-ray"/>
    <property type="resolution" value="2.40 A"/>
    <property type="chains" value="A/D=1-341"/>
</dbReference>
<dbReference type="PDB" id="7KAB">
    <property type="method" value="X-ray"/>
    <property type="resolution" value="2.50 A"/>
    <property type="chains" value="A=1-341"/>
</dbReference>
<dbReference type="PDB" id="9DRS">
    <property type="method" value="X-ray"/>
    <property type="resolution" value="2.35 A"/>
    <property type="chains" value="A/D=1-341"/>
</dbReference>
<dbReference type="PDB" id="9DRV">
    <property type="method" value="X-ray"/>
    <property type="resolution" value="2.46 A"/>
    <property type="chains" value="A/D=1-341"/>
</dbReference>
<dbReference type="PDBsum" id="7DAW"/>
<dbReference type="PDBsum" id="7DB7"/>
<dbReference type="PDBsum" id="7DB8"/>
<dbReference type="PDBsum" id="7K98"/>
<dbReference type="PDBsum" id="7K9M"/>
<dbReference type="PDBsum" id="7KA0"/>
<dbReference type="PDBsum" id="7KAB"/>
<dbReference type="PDBsum" id="9DRS"/>
<dbReference type="PDBsum" id="9DRV"/>
<dbReference type="SMR" id="P9WFU3"/>
<dbReference type="FunCoup" id="P9WFU3">
    <property type="interactions" value="511"/>
</dbReference>
<dbReference type="STRING" id="83332.Rv1649"/>
<dbReference type="PaxDb" id="83332-Rv1649"/>
<dbReference type="DNASU" id="885105"/>
<dbReference type="GeneID" id="885105"/>
<dbReference type="KEGG" id="mtu:Rv1649"/>
<dbReference type="KEGG" id="mtv:RVBD_1649"/>
<dbReference type="PATRIC" id="fig|83332.111.peg.1834"/>
<dbReference type="TubercuList" id="Rv1649"/>
<dbReference type="eggNOG" id="COG0016">
    <property type="taxonomic scope" value="Bacteria"/>
</dbReference>
<dbReference type="InParanoid" id="P9WFU3"/>
<dbReference type="OrthoDB" id="9800719at2"/>
<dbReference type="PhylomeDB" id="P9WFU3"/>
<dbReference type="Proteomes" id="UP000001584">
    <property type="component" value="Chromosome"/>
</dbReference>
<dbReference type="GO" id="GO:0005737">
    <property type="term" value="C:cytoplasm"/>
    <property type="evidence" value="ECO:0000318"/>
    <property type="project" value="GO_Central"/>
</dbReference>
<dbReference type="GO" id="GO:0005886">
    <property type="term" value="C:plasma membrane"/>
    <property type="evidence" value="ECO:0007005"/>
    <property type="project" value="MTBBASE"/>
</dbReference>
<dbReference type="GO" id="GO:0005524">
    <property type="term" value="F:ATP binding"/>
    <property type="evidence" value="ECO:0007669"/>
    <property type="project" value="UniProtKB-UniRule"/>
</dbReference>
<dbReference type="GO" id="GO:0000287">
    <property type="term" value="F:magnesium ion binding"/>
    <property type="evidence" value="ECO:0007669"/>
    <property type="project" value="UniProtKB-UniRule"/>
</dbReference>
<dbReference type="GO" id="GO:0004826">
    <property type="term" value="F:phenylalanine-tRNA ligase activity"/>
    <property type="evidence" value="ECO:0000318"/>
    <property type="project" value="GO_Central"/>
</dbReference>
<dbReference type="GO" id="GO:0000049">
    <property type="term" value="F:tRNA binding"/>
    <property type="evidence" value="ECO:0007669"/>
    <property type="project" value="InterPro"/>
</dbReference>
<dbReference type="GO" id="GO:0006432">
    <property type="term" value="P:phenylalanyl-tRNA aminoacylation"/>
    <property type="evidence" value="ECO:0000318"/>
    <property type="project" value="GO_Central"/>
</dbReference>
<dbReference type="CDD" id="cd00496">
    <property type="entry name" value="PheRS_alpha_core"/>
    <property type="match status" value="1"/>
</dbReference>
<dbReference type="FunFam" id="3.30.930.10:FF:000003">
    <property type="entry name" value="Phenylalanine--tRNA ligase alpha subunit"/>
    <property type="match status" value="1"/>
</dbReference>
<dbReference type="Gene3D" id="3.30.930.10">
    <property type="entry name" value="Bira Bifunctional Protein, Domain 2"/>
    <property type="match status" value="1"/>
</dbReference>
<dbReference type="HAMAP" id="MF_00281">
    <property type="entry name" value="Phe_tRNA_synth_alpha1"/>
    <property type="match status" value="1"/>
</dbReference>
<dbReference type="InterPro" id="IPR006195">
    <property type="entry name" value="aa-tRNA-synth_II"/>
</dbReference>
<dbReference type="InterPro" id="IPR045864">
    <property type="entry name" value="aa-tRNA-synth_II/BPL/LPL"/>
</dbReference>
<dbReference type="InterPro" id="IPR004529">
    <property type="entry name" value="Phe-tRNA-synth_IIc_asu"/>
</dbReference>
<dbReference type="InterPro" id="IPR004188">
    <property type="entry name" value="Phe-tRNA_ligase_II_N"/>
</dbReference>
<dbReference type="InterPro" id="IPR022911">
    <property type="entry name" value="Phe_tRNA_ligase_alpha1_bac"/>
</dbReference>
<dbReference type="InterPro" id="IPR002319">
    <property type="entry name" value="Phenylalanyl-tRNA_Synthase"/>
</dbReference>
<dbReference type="InterPro" id="IPR010978">
    <property type="entry name" value="tRNA-bd_arm"/>
</dbReference>
<dbReference type="NCBIfam" id="TIGR00468">
    <property type="entry name" value="pheS"/>
    <property type="match status" value="1"/>
</dbReference>
<dbReference type="PANTHER" id="PTHR11538:SF41">
    <property type="entry name" value="PHENYLALANINE--TRNA LIGASE, MITOCHONDRIAL"/>
    <property type="match status" value="1"/>
</dbReference>
<dbReference type="PANTHER" id="PTHR11538">
    <property type="entry name" value="PHENYLALANYL-TRNA SYNTHETASE"/>
    <property type="match status" value="1"/>
</dbReference>
<dbReference type="Pfam" id="PF02912">
    <property type="entry name" value="Phe_tRNA-synt_N"/>
    <property type="match status" value="1"/>
</dbReference>
<dbReference type="Pfam" id="PF01409">
    <property type="entry name" value="tRNA-synt_2d"/>
    <property type="match status" value="1"/>
</dbReference>
<dbReference type="SUPFAM" id="SSF55681">
    <property type="entry name" value="Class II aaRS and biotin synthetases"/>
    <property type="match status" value="1"/>
</dbReference>
<dbReference type="SUPFAM" id="SSF46589">
    <property type="entry name" value="tRNA-binding arm"/>
    <property type="match status" value="1"/>
</dbReference>
<dbReference type="PROSITE" id="PS50862">
    <property type="entry name" value="AA_TRNA_LIGASE_II"/>
    <property type="match status" value="1"/>
</dbReference>
<reference key="1">
    <citation type="journal article" date="1998" name="Nature">
        <title>Deciphering the biology of Mycobacterium tuberculosis from the complete genome sequence.</title>
        <authorList>
            <person name="Cole S.T."/>
            <person name="Brosch R."/>
            <person name="Parkhill J."/>
            <person name="Garnier T."/>
            <person name="Churcher C.M."/>
            <person name="Harris D.E."/>
            <person name="Gordon S.V."/>
            <person name="Eiglmeier K."/>
            <person name="Gas S."/>
            <person name="Barry C.E. III"/>
            <person name="Tekaia F."/>
            <person name="Badcock K."/>
            <person name="Basham D."/>
            <person name="Brown D."/>
            <person name="Chillingworth T."/>
            <person name="Connor R."/>
            <person name="Davies R.M."/>
            <person name="Devlin K."/>
            <person name="Feltwell T."/>
            <person name="Gentles S."/>
            <person name="Hamlin N."/>
            <person name="Holroyd S."/>
            <person name="Hornsby T."/>
            <person name="Jagels K."/>
            <person name="Krogh A."/>
            <person name="McLean J."/>
            <person name="Moule S."/>
            <person name="Murphy L.D."/>
            <person name="Oliver S."/>
            <person name="Osborne J."/>
            <person name="Quail M.A."/>
            <person name="Rajandream M.A."/>
            <person name="Rogers J."/>
            <person name="Rutter S."/>
            <person name="Seeger K."/>
            <person name="Skelton S."/>
            <person name="Squares S."/>
            <person name="Squares R."/>
            <person name="Sulston J.E."/>
            <person name="Taylor K."/>
            <person name="Whitehead S."/>
            <person name="Barrell B.G."/>
        </authorList>
    </citation>
    <scope>NUCLEOTIDE SEQUENCE [LARGE SCALE GENOMIC DNA]</scope>
    <source>
        <strain>ATCC 25618 / H37Rv</strain>
    </source>
</reference>
<reference key="2">
    <citation type="journal article" date="2011" name="Mol. Cell. Proteomics">
        <title>Proteogenomic analysis of Mycobacterium tuberculosis by high resolution mass spectrometry.</title>
        <authorList>
            <person name="Kelkar D.S."/>
            <person name="Kumar D."/>
            <person name="Kumar P."/>
            <person name="Balakrishnan L."/>
            <person name="Muthusamy B."/>
            <person name="Yadav A.K."/>
            <person name="Shrivastava P."/>
            <person name="Marimuthu A."/>
            <person name="Anand S."/>
            <person name="Sundaram H."/>
            <person name="Kingsbury R."/>
            <person name="Harsha H.C."/>
            <person name="Nair B."/>
            <person name="Prasad T.S."/>
            <person name="Chauhan D.S."/>
            <person name="Katoch K."/>
            <person name="Katoch V.M."/>
            <person name="Kumar P."/>
            <person name="Chaerkady R."/>
            <person name="Ramachandran S."/>
            <person name="Dash D."/>
            <person name="Pandey A."/>
        </authorList>
    </citation>
    <scope>IDENTIFICATION BY MASS SPECTROMETRY [LARGE SCALE ANALYSIS]</scope>
    <source>
        <strain>ATCC 25618 / H37Rv</strain>
    </source>
</reference>